<evidence type="ECO:0000250" key="1"/>
<evidence type="ECO:0000250" key="2">
    <source>
        <dbReference type="UniProtKB" id="P80321"/>
    </source>
</evidence>
<evidence type="ECO:0000256" key="3">
    <source>
        <dbReference type="SAM" id="MobiDB-lite"/>
    </source>
</evidence>
<evidence type="ECO:0000305" key="4"/>
<accession>P81483</accession>
<dbReference type="MEROPS" id="I12.001"/>
<dbReference type="GO" id="GO:0005576">
    <property type="term" value="C:extracellular region"/>
    <property type="evidence" value="ECO:0007669"/>
    <property type="project" value="InterPro"/>
</dbReference>
<dbReference type="GO" id="GO:0004867">
    <property type="term" value="F:serine-type endopeptidase inhibitor activity"/>
    <property type="evidence" value="ECO:0007669"/>
    <property type="project" value="UniProtKB-KW"/>
</dbReference>
<dbReference type="CDD" id="cd00023">
    <property type="entry name" value="BBI"/>
    <property type="match status" value="1"/>
</dbReference>
<dbReference type="FunFam" id="2.10.69.10:FF:000001">
    <property type="entry name" value="Bowman-Birk type proteinase inhibitor"/>
    <property type="match status" value="1"/>
</dbReference>
<dbReference type="Gene3D" id="2.10.69.10">
    <property type="entry name" value="Cysteine Protease (Bromelain) Inhibitor, subunit H"/>
    <property type="match status" value="1"/>
</dbReference>
<dbReference type="InterPro" id="IPR035995">
    <property type="entry name" value="Bowman-Birk_prot_inh"/>
</dbReference>
<dbReference type="InterPro" id="IPR000877">
    <property type="entry name" value="Prot_inh_BBI"/>
</dbReference>
<dbReference type="Pfam" id="PF00228">
    <property type="entry name" value="Bowman-Birk_leg"/>
    <property type="match status" value="2"/>
</dbReference>
<dbReference type="SMART" id="SM00269">
    <property type="entry name" value="BowB"/>
    <property type="match status" value="1"/>
</dbReference>
<dbReference type="SUPFAM" id="SSF57247">
    <property type="entry name" value="Bowman-Birk inhibitor, BBI"/>
    <property type="match status" value="1"/>
</dbReference>
<keyword id="KW-0903">Direct protein sequencing</keyword>
<keyword id="KW-1015">Disulfide bond</keyword>
<keyword id="KW-0646">Protease inhibitor</keyword>
<keyword id="KW-0722">Serine protease inhibitor</keyword>
<comment type="similarity">
    <text evidence="4">Belongs to the Bowman-Birk serine protease inhibitor family.</text>
</comment>
<organism>
    <name type="scientific">Phaseolus vulgaris</name>
    <name type="common">Kidney bean</name>
    <name type="synonym">French bean</name>
    <dbReference type="NCBI Taxonomy" id="3885"/>
    <lineage>
        <taxon>Eukaryota</taxon>
        <taxon>Viridiplantae</taxon>
        <taxon>Streptophyta</taxon>
        <taxon>Embryophyta</taxon>
        <taxon>Tracheophyta</taxon>
        <taxon>Spermatophyta</taxon>
        <taxon>Magnoliopsida</taxon>
        <taxon>eudicotyledons</taxon>
        <taxon>Gunneridae</taxon>
        <taxon>Pentapetalae</taxon>
        <taxon>rosids</taxon>
        <taxon>fabids</taxon>
        <taxon>Fabales</taxon>
        <taxon>Fabaceae</taxon>
        <taxon>Papilionoideae</taxon>
        <taxon>50 kb inversion clade</taxon>
        <taxon>NPAAA clade</taxon>
        <taxon>indigoferoid/millettioid clade</taxon>
        <taxon>Phaseoleae</taxon>
        <taxon>Phaseolus</taxon>
    </lineage>
</organism>
<proteinExistence type="evidence at protein level"/>
<name>IBB4_PHAVU</name>
<reference key="1">
    <citation type="journal article" date="1993" name="Z. Lebensm. Unters. Forsch.">
        <title>Primary structures of proteinase inhibitors from Phaseolus vulgaris var. nanus (cv. Borlotto).</title>
        <authorList>
            <person name="Funk A."/>
            <person name="Weder J.K."/>
            <person name="Belitz H.-D."/>
        </authorList>
    </citation>
    <scope>PROTEIN SEQUENCE</scope>
    <source>
        <strain>cv. Borlotto</strain>
    </source>
</reference>
<protein>
    <recommendedName>
        <fullName>Bowman-Birk type proteinase inhibitor PVI-4</fullName>
    </recommendedName>
</protein>
<sequence length="85" mass="9235">KSGHRHESXBSTBXASXSSKPCCBHCACTKSIPPQCRCSBLRLNSCHSECKGCICTFSIPAQCICTDTNNFCYEPCKSSHGPBNN</sequence>
<feature type="chain" id="PRO_0000105853" description="Bowman-Birk type proteinase inhibitor PVI-4">
    <location>
        <begin position="1"/>
        <end position="85"/>
    </location>
</feature>
<feature type="region of interest" description="Disordered" evidence="3">
    <location>
        <begin position="1"/>
        <end position="21"/>
    </location>
</feature>
<feature type="compositionally biased region" description="Low complexity" evidence="3">
    <location>
        <begin position="9"/>
        <end position="19"/>
    </location>
</feature>
<feature type="site" description="Reactive bond for trypsin" evidence="1">
    <location>
        <begin position="30"/>
        <end position="31"/>
    </location>
</feature>
<feature type="site" description="Reactive bond for chymotrypsin" evidence="1">
    <location>
        <begin position="57"/>
        <end position="58"/>
    </location>
</feature>
<feature type="disulfide bond" evidence="2">
    <location>
        <begin position="22"/>
        <end position="76"/>
    </location>
</feature>
<feature type="disulfide bond" evidence="2">
    <location>
        <begin position="23"/>
        <end position="38"/>
    </location>
</feature>
<feature type="disulfide bond" evidence="2">
    <location>
        <begin position="26"/>
        <end position="72"/>
    </location>
</feature>
<feature type="disulfide bond" evidence="2">
    <location>
        <begin position="28"/>
        <end position="36"/>
    </location>
</feature>
<feature type="disulfide bond" evidence="2">
    <location>
        <begin position="46"/>
        <end position="53"/>
    </location>
</feature>
<feature type="disulfide bond" evidence="2">
    <location>
        <begin position="50"/>
        <end position="65"/>
    </location>
</feature>
<feature type="disulfide bond" evidence="2">
    <location>
        <begin position="55"/>
        <end position="63"/>
    </location>
</feature>